<keyword id="KW-0963">Cytoplasm</keyword>
<keyword id="KW-0460">Magnesium</keyword>
<keyword id="KW-0479">Metal-binding</keyword>
<keyword id="KW-0566">Pantothenate biosynthesis</keyword>
<keyword id="KW-0614">Plasmid</keyword>
<keyword id="KW-1185">Reference proteome</keyword>
<keyword id="KW-0808">Transferase</keyword>
<protein>
    <recommendedName>
        <fullName evidence="1">3-methyl-2-oxobutanoate hydroxymethyltransferase</fullName>
        <ecNumber evidence="1">2.1.2.11</ecNumber>
    </recommendedName>
    <alternativeName>
        <fullName evidence="1">Ketopantoate hydroxymethyltransferase</fullName>
        <shortName evidence="1">KPHMT</shortName>
    </alternativeName>
</protein>
<accession>Q1GLQ6</accession>
<dbReference type="EC" id="2.1.2.11" evidence="1"/>
<dbReference type="EMBL" id="CP000376">
    <property type="protein sequence ID" value="ABF62410.1"/>
    <property type="molecule type" value="Genomic_DNA"/>
</dbReference>
<dbReference type="RefSeq" id="WP_011537053.1">
    <property type="nucleotide sequence ID" value="NC_008043.1"/>
</dbReference>
<dbReference type="SMR" id="Q1GLQ6"/>
<dbReference type="KEGG" id="sit:TM1040_3438"/>
<dbReference type="HOGENOM" id="CLU_036645_1_0_5"/>
<dbReference type="OrthoDB" id="9781789at2"/>
<dbReference type="UniPathway" id="UPA00028">
    <property type="reaction ID" value="UER00003"/>
</dbReference>
<dbReference type="Proteomes" id="UP000000636">
    <property type="component" value="Plasmid megaplasmid TM1040"/>
</dbReference>
<dbReference type="GO" id="GO:0005737">
    <property type="term" value="C:cytoplasm"/>
    <property type="evidence" value="ECO:0007669"/>
    <property type="project" value="UniProtKB-SubCell"/>
</dbReference>
<dbReference type="GO" id="GO:0003864">
    <property type="term" value="F:3-methyl-2-oxobutanoate hydroxymethyltransferase activity"/>
    <property type="evidence" value="ECO:0007669"/>
    <property type="project" value="UniProtKB-UniRule"/>
</dbReference>
<dbReference type="GO" id="GO:0000287">
    <property type="term" value="F:magnesium ion binding"/>
    <property type="evidence" value="ECO:0007669"/>
    <property type="project" value="TreeGrafter"/>
</dbReference>
<dbReference type="GO" id="GO:0015940">
    <property type="term" value="P:pantothenate biosynthetic process"/>
    <property type="evidence" value="ECO:0007669"/>
    <property type="project" value="UniProtKB-UniRule"/>
</dbReference>
<dbReference type="CDD" id="cd06557">
    <property type="entry name" value="KPHMT-like"/>
    <property type="match status" value="1"/>
</dbReference>
<dbReference type="FunFam" id="3.20.20.60:FF:000003">
    <property type="entry name" value="3-methyl-2-oxobutanoate hydroxymethyltransferase"/>
    <property type="match status" value="1"/>
</dbReference>
<dbReference type="Gene3D" id="3.20.20.60">
    <property type="entry name" value="Phosphoenolpyruvate-binding domains"/>
    <property type="match status" value="1"/>
</dbReference>
<dbReference type="HAMAP" id="MF_00156">
    <property type="entry name" value="PanB"/>
    <property type="match status" value="1"/>
</dbReference>
<dbReference type="InterPro" id="IPR003700">
    <property type="entry name" value="Pantoate_hydroxy_MeTrfase"/>
</dbReference>
<dbReference type="InterPro" id="IPR015813">
    <property type="entry name" value="Pyrv/PenolPyrv_kinase-like_dom"/>
</dbReference>
<dbReference type="InterPro" id="IPR040442">
    <property type="entry name" value="Pyrv_kinase-like_dom_sf"/>
</dbReference>
<dbReference type="NCBIfam" id="TIGR00222">
    <property type="entry name" value="panB"/>
    <property type="match status" value="1"/>
</dbReference>
<dbReference type="NCBIfam" id="NF001452">
    <property type="entry name" value="PRK00311.1"/>
    <property type="match status" value="1"/>
</dbReference>
<dbReference type="PANTHER" id="PTHR20881">
    <property type="entry name" value="3-METHYL-2-OXOBUTANOATE HYDROXYMETHYLTRANSFERASE"/>
    <property type="match status" value="1"/>
</dbReference>
<dbReference type="PANTHER" id="PTHR20881:SF0">
    <property type="entry name" value="3-METHYL-2-OXOBUTANOATE HYDROXYMETHYLTRANSFERASE"/>
    <property type="match status" value="1"/>
</dbReference>
<dbReference type="Pfam" id="PF02548">
    <property type="entry name" value="Pantoate_transf"/>
    <property type="match status" value="1"/>
</dbReference>
<dbReference type="PIRSF" id="PIRSF000388">
    <property type="entry name" value="Pantoate_hydroxy_MeTrfase"/>
    <property type="match status" value="1"/>
</dbReference>
<dbReference type="SUPFAM" id="SSF51621">
    <property type="entry name" value="Phosphoenolpyruvate/pyruvate domain"/>
    <property type="match status" value="1"/>
</dbReference>
<geneLocation type="plasmid">
    <name>megaplasmid TM1040</name>
</geneLocation>
<reference key="1">
    <citation type="submission" date="2006-05" db="EMBL/GenBank/DDBJ databases">
        <title>Complete sequence of megaplasmid of Silicibacter sp. TM1040.</title>
        <authorList>
            <consortium name="US DOE Joint Genome Institute"/>
            <person name="Copeland A."/>
            <person name="Lucas S."/>
            <person name="Lapidus A."/>
            <person name="Barry K."/>
            <person name="Detter J.C."/>
            <person name="Glavina del Rio T."/>
            <person name="Hammon N."/>
            <person name="Israni S."/>
            <person name="Dalin E."/>
            <person name="Tice H."/>
            <person name="Pitluck S."/>
            <person name="Brettin T."/>
            <person name="Bruce D."/>
            <person name="Han C."/>
            <person name="Tapia R."/>
            <person name="Goodwin L."/>
            <person name="Thompson L.S."/>
            <person name="Gilna P."/>
            <person name="Schmutz J."/>
            <person name="Larimer F."/>
            <person name="Land M."/>
            <person name="Hauser L."/>
            <person name="Kyrpides N."/>
            <person name="Kim E."/>
            <person name="Belas R."/>
            <person name="Moran M.A."/>
            <person name="Buchan A."/>
            <person name="Gonzalez J.M."/>
            <person name="Schell M.A."/>
            <person name="Sun F."/>
            <person name="Richardson P."/>
        </authorList>
    </citation>
    <scope>NUCLEOTIDE SEQUENCE [LARGE SCALE GENOMIC DNA]</scope>
    <source>
        <strain>TM1040</strain>
    </source>
</reference>
<proteinExistence type="inferred from homology"/>
<gene>
    <name evidence="1" type="primary">panB</name>
    <name type="ordered locus">TM1040_3438</name>
</gene>
<organism>
    <name type="scientific">Ruegeria sp. (strain TM1040)</name>
    <name type="common">Silicibacter sp.</name>
    <dbReference type="NCBI Taxonomy" id="292414"/>
    <lineage>
        <taxon>Bacteria</taxon>
        <taxon>Pseudomonadati</taxon>
        <taxon>Pseudomonadota</taxon>
        <taxon>Alphaproteobacteria</taxon>
        <taxon>Rhodobacterales</taxon>
        <taxon>Roseobacteraceae</taxon>
        <taxon>Ruegeria</taxon>
    </lineage>
</organism>
<comment type="function">
    <text evidence="1">Catalyzes the reversible reaction in which hydroxymethyl group from 5,10-methylenetetrahydrofolate is transferred onto alpha-ketoisovalerate to form ketopantoate.</text>
</comment>
<comment type="catalytic activity">
    <reaction evidence="1">
        <text>3-methyl-2-oxobutanoate + (6R)-5,10-methylene-5,6,7,8-tetrahydrofolate + H2O = 2-dehydropantoate + (6S)-5,6,7,8-tetrahydrofolate</text>
        <dbReference type="Rhea" id="RHEA:11824"/>
        <dbReference type="ChEBI" id="CHEBI:11561"/>
        <dbReference type="ChEBI" id="CHEBI:11851"/>
        <dbReference type="ChEBI" id="CHEBI:15377"/>
        <dbReference type="ChEBI" id="CHEBI:15636"/>
        <dbReference type="ChEBI" id="CHEBI:57453"/>
        <dbReference type="EC" id="2.1.2.11"/>
    </reaction>
</comment>
<comment type="cofactor">
    <cofactor evidence="1">
        <name>Mg(2+)</name>
        <dbReference type="ChEBI" id="CHEBI:18420"/>
    </cofactor>
    <text evidence="1">Binds 1 Mg(2+) ion per subunit.</text>
</comment>
<comment type="pathway">
    <text evidence="1">Cofactor biosynthesis; (R)-pantothenate biosynthesis; (R)-pantoate from 3-methyl-2-oxobutanoate: step 1/2.</text>
</comment>
<comment type="subunit">
    <text evidence="1">Homodecamer; pentamer of dimers.</text>
</comment>
<comment type="subcellular location">
    <subcellularLocation>
        <location evidence="1">Cytoplasm</location>
    </subcellularLocation>
</comment>
<comment type="similarity">
    <text evidence="1">Belongs to the PanB family.</text>
</comment>
<feature type="chain" id="PRO_0000297380" description="3-methyl-2-oxobutanoate hydroxymethyltransferase">
    <location>
        <begin position="1"/>
        <end position="280"/>
    </location>
</feature>
<feature type="active site" description="Proton acceptor" evidence="1">
    <location>
        <position position="186"/>
    </location>
</feature>
<feature type="binding site" evidence="1">
    <location>
        <begin position="49"/>
        <end position="50"/>
    </location>
    <ligand>
        <name>3-methyl-2-oxobutanoate</name>
        <dbReference type="ChEBI" id="CHEBI:11851"/>
    </ligand>
</feature>
<feature type="binding site" evidence="1">
    <location>
        <position position="49"/>
    </location>
    <ligand>
        <name>Mg(2+)</name>
        <dbReference type="ChEBI" id="CHEBI:18420"/>
    </ligand>
</feature>
<feature type="binding site" evidence="1">
    <location>
        <position position="88"/>
    </location>
    <ligand>
        <name>3-methyl-2-oxobutanoate</name>
        <dbReference type="ChEBI" id="CHEBI:11851"/>
    </ligand>
</feature>
<feature type="binding site" evidence="1">
    <location>
        <position position="88"/>
    </location>
    <ligand>
        <name>Mg(2+)</name>
        <dbReference type="ChEBI" id="CHEBI:18420"/>
    </ligand>
</feature>
<feature type="binding site" evidence="1">
    <location>
        <position position="118"/>
    </location>
    <ligand>
        <name>3-methyl-2-oxobutanoate</name>
        <dbReference type="ChEBI" id="CHEBI:11851"/>
    </ligand>
</feature>
<feature type="binding site" evidence="1">
    <location>
        <position position="120"/>
    </location>
    <ligand>
        <name>Mg(2+)</name>
        <dbReference type="ChEBI" id="CHEBI:18420"/>
    </ligand>
</feature>
<name>PANB_RUEST</name>
<sequence length="280" mass="29550">MSASSQKTALTAEDIRAMKGRTPIVSLTAYTTPMAQLMDEHCDFVLVGDSVGMVLHGLPSTLGVTMEMMILHGAAVARGLKRAMMVIDMPFGSYEQSPAQAFANAARLMAETGAAAVKLEGGEEMADTIRFLVKRGIPVMAHIGLTPQSINTLGGYKVQGRDDAAKPLIADARAVAEAGAFAVVLEKVPASLADQVTEIVDIPTIGIGASAGCDGQVLVVDDMLGFFGAFKPKFVKRYAELGPAAEEAIADYASEVRARRFPSAEHTFADHAPQKAPQQD</sequence>
<evidence type="ECO:0000255" key="1">
    <source>
        <dbReference type="HAMAP-Rule" id="MF_00156"/>
    </source>
</evidence>